<protein>
    <recommendedName>
        <fullName evidence="1">Small ribosomal subunit protein uS11</fullName>
    </recommendedName>
    <alternativeName>
        <fullName evidence="2">30S ribosomal protein S11</fullName>
    </alternativeName>
</protein>
<organism>
    <name type="scientific">Wolbachia pipientis subsp. Culex pipiens (strain wPip)</name>
    <dbReference type="NCBI Taxonomy" id="570417"/>
    <lineage>
        <taxon>Bacteria</taxon>
        <taxon>Pseudomonadati</taxon>
        <taxon>Pseudomonadota</taxon>
        <taxon>Alphaproteobacteria</taxon>
        <taxon>Rickettsiales</taxon>
        <taxon>Anaplasmataceae</taxon>
        <taxon>Wolbachieae</taxon>
        <taxon>Wolbachia</taxon>
    </lineage>
</organism>
<gene>
    <name evidence="1" type="primary">rpsK</name>
    <name type="ordered locus">WP1188</name>
</gene>
<accession>B3CN48</accession>
<keyword id="KW-0687">Ribonucleoprotein</keyword>
<keyword id="KW-0689">Ribosomal protein</keyword>
<keyword id="KW-0694">RNA-binding</keyword>
<keyword id="KW-0699">rRNA-binding</keyword>
<dbReference type="EMBL" id="AM999887">
    <property type="protein sequence ID" value="CAQ55296.1"/>
    <property type="molecule type" value="Genomic_DNA"/>
</dbReference>
<dbReference type="RefSeq" id="WP_006012273.1">
    <property type="nucleotide sequence ID" value="NC_010981.1"/>
</dbReference>
<dbReference type="SMR" id="B3CN48"/>
<dbReference type="KEGG" id="wpi:WP1188"/>
<dbReference type="eggNOG" id="COG0100">
    <property type="taxonomic scope" value="Bacteria"/>
</dbReference>
<dbReference type="HOGENOM" id="CLU_072439_5_0_5"/>
<dbReference type="Proteomes" id="UP000008814">
    <property type="component" value="Chromosome"/>
</dbReference>
<dbReference type="GO" id="GO:1990904">
    <property type="term" value="C:ribonucleoprotein complex"/>
    <property type="evidence" value="ECO:0007669"/>
    <property type="project" value="UniProtKB-KW"/>
</dbReference>
<dbReference type="GO" id="GO:0005840">
    <property type="term" value="C:ribosome"/>
    <property type="evidence" value="ECO:0007669"/>
    <property type="project" value="UniProtKB-KW"/>
</dbReference>
<dbReference type="GO" id="GO:0019843">
    <property type="term" value="F:rRNA binding"/>
    <property type="evidence" value="ECO:0007669"/>
    <property type="project" value="UniProtKB-UniRule"/>
</dbReference>
<dbReference type="GO" id="GO:0003735">
    <property type="term" value="F:structural constituent of ribosome"/>
    <property type="evidence" value="ECO:0007669"/>
    <property type="project" value="InterPro"/>
</dbReference>
<dbReference type="GO" id="GO:0006412">
    <property type="term" value="P:translation"/>
    <property type="evidence" value="ECO:0007669"/>
    <property type="project" value="UniProtKB-UniRule"/>
</dbReference>
<dbReference type="Gene3D" id="3.30.420.80">
    <property type="entry name" value="Ribosomal protein S11"/>
    <property type="match status" value="1"/>
</dbReference>
<dbReference type="HAMAP" id="MF_01310">
    <property type="entry name" value="Ribosomal_uS11"/>
    <property type="match status" value="1"/>
</dbReference>
<dbReference type="InterPro" id="IPR001971">
    <property type="entry name" value="Ribosomal_uS11"/>
</dbReference>
<dbReference type="InterPro" id="IPR019981">
    <property type="entry name" value="Ribosomal_uS11_bac-type"/>
</dbReference>
<dbReference type="InterPro" id="IPR036967">
    <property type="entry name" value="Ribosomal_uS11_sf"/>
</dbReference>
<dbReference type="NCBIfam" id="NF003698">
    <property type="entry name" value="PRK05309.1"/>
    <property type="match status" value="1"/>
</dbReference>
<dbReference type="NCBIfam" id="TIGR03632">
    <property type="entry name" value="uS11_bact"/>
    <property type="match status" value="1"/>
</dbReference>
<dbReference type="PANTHER" id="PTHR11759">
    <property type="entry name" value="40S RIBOSOMAL PROTEIN S14/30S RIBOSOMAL PROTEIN S11"/>
    <property type="match status" value="1"/>
</dbReference>
<dbReference type="Pfam" id="PF00411">
    <property type="entry name" value="Ribosomal_S11"/>
    <property type="match status" value="1"/>
</dbReference>
<dbReference type="PIRSF" id="PIRSF002131">
    <property type="entry name" value="Ribosomal_S11"/>
    <property type="match status" value="1"/>
</dbReference>
<dbReference type="SUPFAM" id="SSF53137">
    <property type="entry name" value="Translational machinery components"/>
    <property type="match status" value="1"/>
</dbReference>
<evidence type="ECO:0000255" key="1">
    <source>
        <dbReference type="HAMAP-Rule" id="MF_01310"/>
    </source>
</evidence>
<evidence type="ECO:0000305" key="2"/>
<comment type="function">
    <text evidence="1">Located on the platform of the 30S subunit, it bridges several disparate RNA helices of the 16S rRNA. Forms part of the Shine-Dalgarno cleft in the 70S ribosome.</text>
</comment>
<comment type="subunit">
    <text evidence="1">Part of the 30S ribosomal subunit. Interacts with proteins S7 and S18. Binds to IF-3.</text>
</comment>
<comment type="similarity">
    <text evidence="1">Belongs to the universal ribosomal protein uS11 family.</text>
</comment>
<name>RS11_WOLPP</name>
<reference key="1">
    <citation type="journal article" date="2008" name="Mol. Biol. Evol.">
        <title>Genome evolution of Wolbachia strain wPip from the Culex pipiens group.</title>
        <authorList>
            <person name="Klasson L."/>
            <person name="Walker T."/>
            <person name="Sebaihia M."/>
            <person name="Sanders M.J."/>
            <person name="Quail M.A."/>
            <person name="Lord A."/>
            <person name="Sanders S."/>
            <person name="Earl J."/>
            <person name="O'Neill S.L."/>
            <person name="Thomson N."/>
            <person name="Sinkins S.P."/>
            <person name="Parkhill J."/>
        </authorList>
    </citation>
    <scope>NUCLEOTIDE SEQUENCE [LARGE SCALE GENOMIC DNA]</scope>
    <source>
        <strain>wPip</strain>
    </source>
</reference>
<proteinExistence type="inferred from homology"/>
<sequence length="128" mass="13688">MKKVKTVGKNTKRFITGIVHIRATFNNTFVNVTDVCGNTLYQTSVGACGFSGSRKSTPYAAGKVADSAAKKVIERFGMKVVSVIIRGPGFGAEAAVKALRNCGLTVTSIADKTAIPHNGCRLRKKRRV</sequence>
<feature type="chain" id="PRO_1000141157" description="Small ribosomal subunit protein uS11">
    <location>
        <begin position="1"/>
        <end position="128"/>
    </location>
</feature>